<feature type="chain" id="PRO_0000330532" description="Siroheme synthase">
    <location>
        <begin position="1"/>
        <end position="473"/>
    </location>
</feature>
<feature type="region of interest" description="Precorrin-2 dehydrogenase /sirohydrochlorin ferrochelatase" evidence="1">
    <location>
        <begin position="1"/>
        <end position="203"/>
    </location>
</feature>
<feature type="region of interest" description="Uroporphyrinogen-III C-methyltransferase" evidence="1">
    <location>
        <begin position="215"/>
        <end position="473"/>
    </location>
</feature>
<feature type="active site" description="Proton acceptor" evidence="1">
    <location>
        <position position="247"/>
    </location>
</feature>
<feature type="active site" description="Proton donor" evidence="1">
    <location>
        <position position="269"/>
    </location>
</feature>
<feature type="binding site" evidence="1">
    <location>
        <begin position="22"/>
        <end position="23"/>
    </location>
    <ligand>
        <name>NAD(+)</name>
        <dbReference type="ChEBI" id="CHEBI:57540"/>
    </ligand>
</feature>
<feature type="binding site" evidence="1">
    <location>
        <begin position="43"/>
        <end position="44"/>
    </location>
    <ligand>
        <name>NAD(+)</name>
        <dbReference type="ChEBI" id="CHEBI:57540"/>
    </ligand>
</feature>
<feature type="binding site" evidence="1">
    <location>
        <position position="224"/>
    </location>
    <ligand>
        <name>S-adenosyl-L-methionine</name>
        <dbReference type="ChEBI" id="CHEBI:59789"/>
    </ligand>
</feature>
<feature type="binding site" evidence="1">
    <location>
        <begin position="300"/>
        <end position="302"/>
    </location>
    <ligand>
        <name>S-adenosyl-L-methionine</name>
        <dbReference type="ChEBI" id="CHEBI:59789"/>
    </ligand>
</feature>
<feature type="binding site" evidence="1">
    <location>
        <position position="305"/>
    </location>
    <ligand>
        <name>S-adenosyl-L-methionine</name>
        <dbReference type="ChEBI" id="CHEBI:59789"/>
    </ligand>
</feature>
<feature type="binding site" evidence="1">
    <location>
        <begin position="330"/>
        <end position="331"/>
    </location>
    <ligand>
        <name>S-adenosyl-L-methionine</name>
        <dbReference type="ChEBI" id="CHEBI:59789"/>
    </ligand>
</feature>
<feature type="binding site" evidence="1">
    <location>
        <position position="382"/>
    </location>
    <ligand>
        <name>S-adenosyl-L-methionine</name>
        <dbReference type="ChEBI" id="CHEBI:59789"/>
    </ligand>
</feature>
<feature type="binding site" evidence="1">
    <location>
        <position position="411"/>
    </location>
    <ligand>
        <name>S-adenosyl-L-methionine</name>
        <dbReference type="ChEBI" id="CHEBI:59789"/>
    </ligand>
</feature>
<feature type="modified residue" description="Phosphoserine" evidence="1">
    <location>
        <position position="128"/>
    </location>
</feature>
<organism>
    <name type="scientific">Pseudoalteromonas translucida (strain TAC 125)</name>
    <dbReference type="NCBI Taxonomy" id="326442"/>
    <lineage>
        <taxon>Bacteria</taxon>
        <taxon>Pseudomonadati</taxon>
        <taxon>Pseudomonadota</taxon>
        <taxon>Gammaproteobacteria</taxon>
        <taxon>Alteromonadales</taxon>
        <taxon>Pseudoalteromonadaceae</taxon>
        <taxon>Pseudoalteromonas</taxon>
    </lineage>
</organism>
<protein>
    <recommendedName>
        <fullName evidence="1">Siroheme synthase</fullName>
    </recommendedName>
    <domain>
        <recommendedName>
            <fullName evidence="1">Uroporphyrinogen-III C-methyltransferase</fullName>
            <shortName evidence="1">Urogen III methylase</shortName>
            <ecNumber evidence="1">2.1.1.107</ecNumber>
        </recommendedName>
        <alternativeName>
            <fullName evidence="1">SUMT</fullName>
        </alternativeName>
        <alternativeName>
            <fullName evidence="1">Uroporphyrinogen III methylase</fullName>
            <shortName evidence="1">UROM</shortName>
        </alternativeName>
    </domain>
    <domain>
        <recommendedName>
            <fullName evidence="1">Precorrin-2 dehydrogenase</fullName>
            <ecNumber evidence="1">1.3.1.76</ecNumber>
        </recommendedName>
    </domain>
    <domain>
        <recommendedName>
            <fullName evidence="1">Sirohydrochlorin ferrochelatase</fullName>
            <ecNumber evidence="1">4.99.1.4</ecNumber>
        </recommendedName>
    </domain>
</protein>
<sequence length="473" mass="51809">MQYLPIFTKLDNKPVLVVGGGDVALRKCSALLKARASITLVAPKFCQQLIELASENKVTLIHEYFSEQHLKNMMLVIAATDLEHVNSQVFELANAHNIFVNVVDDQPKCTFIFPSIVDRNPITIAISSAGTAPVLARRLREKLETLIPQHIGPLATLVGGFRSKVKQRFKHFADRRQFWEGVFDSSVVSKVQTGDTQAAEQQLEHMLNAKAEPEGEVYVVGAGPGDPELLTLKALQLMQQADVVVYDYLVSDEIMELVRRDADLICVGKRLGDHSVAQQDTNQMLVDLAKQGKKVCRIKGGDPFIYGRGGEEVQVLAANKVNYQIVPGITAAAGCSAYAGIPLTHRDHAQAIQFVTGHCKKDGQELDWQSLAKPNQTLAIYMGVIKSPHIQAELLKHGRNANTPVAIIENGTRKNQRVITGKLGELADLITRNSVVSPALLIIGEVASLHQELHWFGAKAQTSSFAQPLTDVA</sequence>
<keyword id="KW-0169">Cobalamin biosynthesis</keyword>
<keyword id="KW-0456">Lyase</keyword>
<keyword id="KW-0489">Methyltransferase</keyword>
<keyword id="KW-0511">Multifunctional enzyme</keyword>
<keyword id="KW-0520">NAD</keyword>
<keyword id="KW-0560">Oxidoreductase</keyword>
<keyword id="KW-0597">Phosphoprotein</keyword>
<keyword id="KW-0627">Porphyrin biosynthesis</keyword>
<keyword id="KW-1185">Reference proteome</keyword>
<keyword id="KW-0949">S-adenosyl-L-methionine</keyword>
<keyword id="KW-0808">Transferase</keyword>
<dbReference type="EC" id="2.1.1.107" evidence="1"/>
<dbReference type="EC" id="1.3.1.76" evidence="1"/>
<dbReference type="EC" id="4.99.1.4" evidence="1"/>
<dbReference type="EMBL" id="CR954246">
    <property type="protein sequence ID" value="CAI85316.1"/>
    <property type="molecule type" value="Genomic_DNA"/>
</dbReference>
<dbReference type="SMR" id="Q3ILQ9"/>
<dbReference type="STRING" id="326442.PSHAa0213"/>
<dbReference type="KEGG" id="pha:PSHAa0213"/>
<dbReference type="PATRIC" id="fig|326442.8.peg.204"/>
<dbReference type="eggNOG" id="COG0007">
    <property type="taxonomic scope" value="Bacteria"/>
</dbReference>
<dbReference type="eggNOG" id="COG1648">
    <property type="taxonomic scope" value="Bacteria"/>
</dbReference>
<dbReference type="HOGENOM" id="CLU_011276_2_0_6"/>
<dbReference type="BioCyc" id="PHAL326442:PSHA_RS01045-MONOMER"/>
<dbReference type="UniPathway" id="UPA00148">
    <property type="reaction ID" value="UER00211"/>
</dbReference>
<dbReference type="UniPathway" id="UPA00148">
    <property type="reaction ID" value="UER00222"/>
</dbReference>
<dbReference type="UniPathway" id="UPA00262">
    <property type="reaction ID" value="UER00211"/>
</dbReference>
<dbReference type="UniPathway" id="UPA00262">
    <property type="reaction ID" value="UER00222"/>
</dbReference>
<dbReference type="UniPathway" id="UPA00262">
    <property type="reaction ID" value="UER00376"/>
</dbReference>
<dbReference type="Proteomes" id="UP000006843">
    <property type="component" value="Chromosome I"/>
</dbReference>
<dbReference type="GO" id="GO:0051287">
    <property type="term" value="F:NAD binding"/>
    <property type="evidence" value="ECO:0007669"/>
    <property type="project" value="InterPro"/>
</dbReference>
<dbReference type="GO" id="GO:0043115">
    <property type="term" value="F:precorrin-2 dehydrogenase activity"/>
    <property type="evidence" value="ECO:0007669"/>
    <property type="project" value="UniProtKB-UniRule"/>
</dbReference>
<dbReference type="GO" id="GO:0051266">
    <property type="term" value="F:sirohydrochlorin ferrochelatase activity"/>
    <property type="evidence" value="ECO:0007669"/>
    <property type="project" value="UniProtKB-EC"/>
</dbReference>
<dbReference type="GO" id="GO:0004851">
    <property type="term" value="F:uroporphyrin-III C-methyltransferase activity"/>
    <property type="evidence" value="ECO:0007669"/>
    <property type="project" value="UniProtKB-UniRule"/>
</dbReference>
<dbReference type="GO" id="GO:0009236">
    <property type="term" value="P:cobalamin biosynthetic process"/>
    <property type="evidence" value="ECO:0007669"/>
    <property type="project" value="UniProtKB-UniRule"/>
</dbReference>
<dbReference type="GO" id="GO:0032259">
    <property type="term" value="P:methylation"/>
    <property type="evidence" value="ECO:0007669"/>
    <property type="project" value="UniProtKB-KW"/>
</dbReference>
<dbReference type="GO" id="GO:0019354">
    <property type="term" value="P:siroheme biosynthetic process"/>
    <property type="evidence" value="ECO:0007669"/>
    <property type="project" value="UniProtKB-UniRule"/>
</dbReference>
<dbReference type="CDD" id="cd11642">
    <property type="entry name" value="SUMT"/>
    <property type="match status" value="1"/>
</dbReference>
<dbReference type="FunFam" id="3.30.160.110:FF:000001">
    <property type="entry name" value="Siroheme synthase"/>
    <property type="match status" value="1"/>
</dbReference>
<dbReference type="FunFam" id="3.30.950.10:FF:000001">
    <property type="entry name" value="Siroheme synthase"/>
    <property type="match status" value="1"/>
</dbReference>
<dbReference type="FunFam" id="3.40.1010.10:FF:000001">
    <property type="entry name" value="Siroheme synthase"/>
    <property type="match status" value="1"/>
</dbReference>
<dbReference type="Gene3D" id="3.40.1010.10">
    <property type="entry name" value="Cobalt-precorrin-4 Transmethylase, Domain 1"/>
    <property type="match status" value="1"/>
</dbReference>
<dbReference type="Gene3D" id="3.30.950.10">
    <property type="entry name" value="Methyltransferase, Cobalt-precorrin-4 Transmethylase, Domain 2"/>
    <property type="match status" value="1"/>
</dbReference>
<dbReference type="Gene3D" id="3.40.50.720">
    <property type="entry name" value="NAD(P)-binding Rossmann-like Domain"/>
    <property type="match status" value="1"/>
</dbReference>
<dbReference type="Gene3D" id="1.10.8.210">
    <property type="entry name" value="Sirohaem synthase, dimerisation domain"/>
    <property type="match status" value="1"/>
</dbReference>
<dbReference type="Gene3D" id="3.30.160.110">
    <property type="entry name" value="Siroheme synthase, domain 2"/>
    <property type="match status" value="1"/>
</dbReference>
<dbReference type="HAMAP" id="MF_01646">
    <property type="entry name" value="Siroheme_synth"/>
    <property type="match status" value="1"/>
</dbReference>
<dbReference type="InterPro" id="IPR000878">
    <property type="entry name" value="4pyrrol_Mease"/>
</dbReference>
<dbReference type="InterPro" id="IPR035996">
    <property type="entry name" value="4pyrrol_Methylase_sf"/>
</dbReference>
<dbReference type="InterPro" id="IPR014777">
    <property type="entry name" value="4pyrrole_Mease_sub1"/>
</dbReference>
<dbReference type="InterPro" id="IPR014776">
    <property type="entry name" value="4pyrrole_Mease_sub2"/>
</dbReference>
<dbReference type="InterPro" id="IPR006366">
    <property type="entry name" value="CobA/CysG_C"/>
</dbReference>
<dbReference type="InterPro" id="IPR036291">
    <property type="entry name" value="NAD(P)-bd_dom_sf"/>
</dbReference>
<dbReference type="InterPro" id="IPR050161">
    <property type="entry name" value="Siro_Cobalamin_biosynth"/>
</dbReference>
<dbReference type="InterPro" id="IPR037115">
    <property type="entry name" value="Sirohaem_synt_dimer_dom_sf"/>
</dbReference>
<dbReference type="InterPro" id="IPR012409">
    <property type="entry name" value="Sirohaem_synth"/>
</dbReference>
<dbReference type="InterPro" id="IPR028281">
    <property type="entry name" value="Sirohaem_synthase_central"/>
</dbReference>
<dbReference type="InterPro" id="IPR019478">
    <property type="entry name" value="Sirohaem_synthase_dimer_dom"/>
</dbReference>
<dbReference type="InterPro" id="IPR006367">
    <property type="entry name" value="Sirohaem_synthase_N"/>
</dbReference>
<dbReference type="InterPro" id="IPR003043">
    <property type="entry name" value="Uropor_MeTrfase_CS"/>
</dbReference>
<dbReference type="NCBIfam" id="TIGR01469">
    <property type="entry name" value="cobA_cysG_Cterm"/>
    <property type="match status" value="1"/>
</dbReference>
<dbReference type="NCBIfam" id="TIGR01470">
    <property type="entry name" value="cysG_Nterm"/>
    <property type="match status" value="1"/>
</dbReference>
<dbReference type="NCBIfam" id="NF004790">
    <property type="entry name" value="PRK06136.1"/>
    <property type="match status" value="1"/>
</dbReference>
<dbReference type="NCBIfam" id="NF007922">
    <property type="entry name" value="PRK10637.1"/>
    <property type="match status" value="1"/>
</dbReference>
<dbReference type="PANTHER" id="PTHR45790:SF1">
    <property type="entry name" value="SIROHEME SYNTHASE"/>
    <property type="match status" value="1"/>
</dbReference>
<dbReference type="PANTHER" id="PTHR45790">
    <property type="entry name" value="SIROHEME SYNTHASE-RELATED"/>
    <property type="match status" value="1"/>
</dbReference>
<dbReference type="Pfam" id="PF10414">
    <property type="entry name" value="CysG_dimeriser"/>
    <property type="match status" value="1"/>
</dbReference>
<dbReference type="Pfam" id="PF13241">
    <property type="entry name" value="NAD_binding_7"/>
    <property type="match status" value="1"/>
</dbReference>
<dbReference type="Pfam" id="PF14824">
    <property type="entry name" value="Sirohm_synth_M"/>
    <property type="match status" value="1"/>
</dbReference>
<dbReference type="Pfam" id="PF00590">
    <property type="entry name" value="TP_methylase"/>
    <property type="match status" value="1"/>
</dbReference>
<dbReference type="PIRSF" id="PIRSF036426">
    <property type="entry name" value="Sirohaem_synth"/>
    <property type="match status" value="1"/>
</dbReference>
<dbReference type="SUPFAM" id="SSF51735">
    <property type="entry name" value="NAD(P)-binding Rossmann-fold domains"/>
    <property type="match status" value="1"/>
</dbReference>
<dbReference type="SUPFAM" id="SSF75615">
    <property type="entry name" value="Siroheme synthase middle domains-like"/>
    <property type="match status" value="1"/>
</dbReference>
<dbReference type="SUPFAM" id="SSF53790">
    <property type="entry name" value="Tetrapyrrole methylase"/>
    <property type="match status" value="1"/>
</dbReference>
<dbReference type="PROSITE" id="PS00839">
    <property type="entry name" value="SUMT_1"/>
    <property type="match status" value="1"/>
</dbReference>
<dbReference type="PROSITE" id="PS00840">
    <property type="entry name" value="SUMT_2"/>
    <property type="match status" value="1"/>
</dbReference>
<reference key="1">
    <citation type="journal article" date="2005" name="Genome Res.">
        <title>Coping with cold: the genome of the versatile marine Antarctica bacterium Pseudoalteromonas haloplanktis TAC125.</title>
        <authorList>
            <person name="Medigue C."/>
            <person name="Krin E."/>
            <person name="Pascal G."/>
            <person name="Barbe V."/>
            <person name="Bernsel A."/>
            <person name="Bertin P.N."/>
            <person name="Cheung F."/>
            <person name="Cruveiller S."/>
            <person name="D'Amico S."/>
            <person name="Duilio A."/>
            <person name="Fang G."/>
            <person name="Feller G."/>
            <person name="Ho C."/>
            <person name="Mangenot S."/>
            <person name="Marino G."/>
            <person name="Nilsson J."/>
            <person name="Parrilli E."/>
            <person name="Rocha E.P.C."/>
            <person name="Rouy Z."/>
            <person name="Sekowska A."/>
            <person name="Tutino M.L."/>
            <person name="Vallenet D."/>
            <person name="von Heijne G."/>
            <person name="Danchin A."/>
        </authorList>
    </citation>
    <scope>NUCLEOTIDE SEQUENCE [LARGE SCALE GENOMIC DNA]</scope>
    <source>
        <strain>TAC 125</strain>
    </source>
</reference>
<proteinExistence type="inferred from homology"/>
<name>CYSG_PSET1</name>
<gene>
    <name evidence="1" type="primary">cysG</name>
    <name type="ordered locus">PSHAa0213</name>
</gene>
<accession>Q3ILQ9</accession>
<comment type="function">
    <text evidence="1">Multifunctional enzyme that catalyzes the SAM-dependent methylations of uroporphyrinogen III at position C-2 and C-7 to form precorrin-2 via precorrin-1. Then it catalyzes the NAD-dependent ring dehydrogenation of precorrin-2 to yield sirohydrochlorin. Finally, it catalyzes the ferrochelation of sirohydrochlorin to yield siroheme.</text>
</comment>
<comment type="catalytic activity">
    <reaction evidence="1">
        <text>uroporphyrinogen III + 2 S-adenosyl-L-methionine = precorrin-2 + 2 S-adenosyl-L-homocysteine + H(+)</text>
        <dbReference type="Rhea" id="RHEA:32459"/>
        <dbReference type="ChEBI" id="CHEBI:15378"/>
        <dbReference type="ChEBI" id="CHEBI:57308"/>
        <dbReference type="ChEBI" id="CHEBI:57856"/>
        <dbReference type="ChEBI" id="CHEBI:58827"/>
        <dbReference type="ChEBI" id="CHEBI:59789"/>
        <dbReference type="EC" id="2.1.1.107"/>
    </reaction>
</comment>
<comment type="catalytic activity">
    <reaction evidence="1">
        <text>precorrin-2 + NAD(+) = sirohydrochlorin + NADH + 2 H(+)</text>
        <dbReference type="Rhea" id="RHEA:15613"/>
        <dbReference type="ChEBI" id="CHEBI:15378"/>
        <dbReference type="ChEBI" id="CHEBI:57540"/>
        <dbReference type="ChEBI" id="CHEBI:57945"/>
        <dbReference type="ChEBI" id="CHEBI:58351"/>
        <dbReference type="ChEBI" id="CHEBI:58827"/>
        <dbReference type="EC" id="1.3.1.76"/>
    </reaction>
</comment>
<comment type="catalytic activity">
    <reaction evidence="1">
        <text>siroheme + 2 H(+) = sirohydrochlorin + Fe(2+)</text>
        <dbReference type="Rhea" id="RHEA:24360"/>
        <dbReference type="ChEBI" id="CHEBI:15378"/>
        <dbReference type="ChEBI" id="CHEBI:29033"/>
        <dbReference type="ChEBI" id="CHEBI:58351"/>
        <dbReference type="ChEBI" id="CHEBI:60052"/>
        <dbReference type="EC" id="4.99.1.4"/>
    </reaction>
</comment>
<comment type="pathway">
    <text evidence="1">Cofactor biosynthesis; adenosylcobalamin biosynthesis; precorrin-2 from uroporphyrinogen III: step 1/1.</text>
</comment>
<comment type="pathway">
    <text evidence="1">Cofactor biosynthesis; adenosylcobalamin biosynthesis; sirohydrochlorin from precorrin-2: step 1/1.</text>
</comment>
<comment type="pathway">
    <text evidence="1">Porphyrin-containing compound metabolism; siroheme biosynthesis; precorrin-2 from uroporphyrinogen III: step 1/1.</text>
</comment>
<comment type="pathway">
    <text evidence="1">Porphyrin-containing compound metabolism; siroheme biosynthesis; siroheme from sirohydrochlorin: step 1/1.</text>
</comment>
<comment type="pathway">
    <text evidence="1">Porphyrin-containing compound metabolism; siroheme biosynthesis; sirohydrochlorin from precorrin-2: step 1/1.</text>
</comment>
<comment type="similarity">
    <text evidence="1">In the N-terminal section; belongs to the precorrin-2 dehydrogenase / sirohydrochlorin ferrochelatase family.</text>
</comment>
<comment type="similarity">
    <text evidence="1">In the C-terminal section; belongs to the precorrin methyltransferase family.</text>
</comment>
<evidence type="ECO:0000255" key="1">
    <source>
        <dbReference type="HAMAP-Rule" id="MF_01646"/>
    </source>
</evidence>